<sequence>MPKPSKGARLGGSAAHEKLLLANLAKSLFEHGRITTTEAKARKLRPYAERLVTKAKKGDLHNRRQVLQVITDKSIVHTLFTEIGPRYENRPGGYTRITKIGNRRGDNAPMAVIELVEALTVAQQATGEAEAATKRAAKDAEGSAEVSEAKVDTTKADDEAAAEESKDA</sequence>
<protein>
    <recommendedName>
        <fullName evidence="1">Large ribosomal subunit protein bL17</fullName>
    </recommendedName>
    <alternativeName>
        <fullName evidence="3">50S ribosomal protein L17</fullName>
    </alternativeName>
</protein>
<reference key="1">
    <citation type="journal article" date="2002" name="Nature">
        <title>Complete genome sequence of the model actinomycete Streptomyces coelicolor A3(2).</title>
        <authorList>
            <person name="Bentley S.D."/>
            <person name="Chater K.F."/>
            <person name="Cerdeno-Tarraga A.-M."/>
            <person name="Challis G.L."/>
            <person name="Thomson N.R."/>
            <person name="James K.D."/>
            <person name="Harris D.E."/>
            <person name="Quail M.A."/>
            <person name="Kieser H."/>
            <person name="Harper D."/>
            <person name="Bateman A."/>
            <person name="Brown S."/>
            <person name="Chandra G."/>
            <person name="Chen C.W."/>
            <person name="Collins M."/>
            <person name="Cronin A."/>
            <person name="Fraser A."/>
            <person name="Goble A."/>
            <person name="Hidalgo J."/>
            <person name="Hornsby T."/>
            <person name="Howarth S."/>
            <person name="Huang C.-H."/>
            <person name="Kieser T."/>
            <person name="Larke L."/>
            <person name="Murphy L.D."/>
            <person name="Oliver K."/>
            <person name="O'Neil S."/>
            <person name="Rabbinowitsch E."/>
            <person name="Rajandream M.A."/>
            <person name="Rutherford K.M."/>
            <person name="Rutter S."/>
            <person name="Seeger K."/>
            <person name="Saunders D."/>
            <person name="Sharp S."/>
            <person name="Squares R."/>
            <person name="Squares S."/>
            <person name="Taylor K."/>
            <person name="Warren T."/>
            <person name="Wietzorrek A."/>
            <person name="Woodward J.R."/>
            <person name="Barrell B.G."/>
            <person name="Parkhill J."/>
            <person name="Hopwood D.A."/>
        </authorList>
    </citation>
    <scope>NUCLEOTIDE SEQUENCE [LARGE SCALE GENOMIC DNA]</scope>
    <source>
        <strain>ATCC BAA-471 / A3(2) / M145</strain>
    </source>
</reference>
<proteinExistence type="inferred from homology"/>
<gene>
    <name evidence="1" type="primary">rplQ</name>
    <name type="ordered locus">SCO4730</name>
    <name type="ORF">SC6G4.08</name>
</gene>
<organism>
    <name type="scientific">Streptomyces coelicolor (strain ATCC BAA-471 / A3(2) / M145)</name>
    <dbReference type="NCBI Taxonomy" id="100226"/>
    <lineage>
        <taxon>Bacteria</taxon>
        <taxon>Bacillati</taxon>
        <taxon>Actinomycetota</taxon>
        <taxon>Actinomycetes</taxon>
        <taxon>Kitasatosporales</taxon>
        <taxon>Streptomycetaceae</taxon>
        <taxon>Streptomyces</taxon>
        <taxon>Streptomyces albidoflavus group</taxon>
    </lineage>
</organism>
<accession>O86775</accession>
<comment type="subunit">
    <text evidence="1">Part of the 50S ribosomal subunit. Contacts protein L32.</text>
</comment>
<comment type="similarity">
    <text evidence="1">Belongs to the bacterial ribosomal protein bL17 family.</text>
</comment>
<keyword id="KW-1185">Reference proteome</keyword>
<keyword id="KW-0687">Ribonucleoprotein</keyword>
<keyword id="KW-0689">Ribosomal protein</keyword>
<evidence type="ECO:0000255" key="1">
    <source>
        <dbReference type="HAMAP-Rule" id="MF_01368"/>
    </source>
</evidence>
<evidence type="ECO:0000256" key="2">
    <source>
        <dbReference type="SAM" id="MobiDB-lite"/>
    </source>
</evidence>
<evidence type="ECO:0000305" key="3"/>
<feature type="chain" id="PRO_0000175543" description="Large ribosomal subunit protein bL17">
    <location>
        <begin position="1"/>
        <end position="168"/>
    </location>
</feature>
<feature type="region of interest" description="Disordered" evidence="2">
    <location>
        <begin position="124"/>
        <end position="168"/>
    </location>
</feature>
<feature type="compositionally biased region" description="Basic and acidic residues" evidence="2">
    <location>
        <begin position="131"/>
        <end position="168"/>
    </location>
</feature>
<dbReference type="EMBL" id="AL939121">
    <property type="protein sequence ID" value="CAA20386.1"/>
    <property type="molecule type" value="Genomic_DNA"/>
</dbReference>
<dbReference type="PIR" id="T35559">
    <property type="entry name" value="T35559"/>
</dbReference>
<dbReference type="RefSeq" id="NP_628888.1">
    <property type="nucleotide sequence ID" value="NC_003888.3"/>
</dbReference>
<dbReference type="RefSeq" id="WP_003974243.1">
    <property type="nucleotide sequence ID" value="NZ_VNID01000016.1"/>
</dbReference>
<dbReference type="SMR" id="O86775"/>
<dbReference type="FunCoup" id="O86775">
    <property type="interactions" value="456"/>
</dbReference>
<dbReference type="STRING" id="100226.gene:17762379"/>
<dbReference type="PaxDb" id="100226-SCO4730"/>
<dbReference type="GeneID" id="91384308"/>
<dbReference type="KEGG" id="sco:SCO4730"/>
<dbReference type="PATRIC" id="fig|100226.15.peg.4801"/>
<dbReference type="eggNOG" id="COG0203">
    <property type="taxonomic scope" value="Bacteria"/>
</dbReference>
<dbReference type="HOGENOM" id="CLU_074407_0_0_11"/>
<dbReference type="InParanoid" id="O86775"/>
<dbReference type="OrthoDB" id="9809073at2"/>
<dbReference type="PhylomeDB" id="O86775"/>
<dbReference type="Proteomes" id="UP000001973">
    <property type="component" value="Chromosome"/>
</dbReference>
<dbReference type="GO" id="GO:0022625">
    <property type="term" value="C:cytosolic large ribosomal subunit"/>
    <property type="evidence" value="ECO:0000318"/>
    <property type="project" value="GO_Central"/>
</dbReference>
<dbReference type="GO" id="GO:0003735">
    <property type="term" value="F:structural constituent of ribosome"/>
    <property type="evidence" value="ECO:0000318"/>
    <property type="project" value="GO_Central"/>
</dbReference>
<dbReference type="GO" id="GO:0006412">
    <property type="term" value="P:translation"/>
    <property type="evidence" value="ECO:0007669"/>
    <property type="project" value="UniProtKB-UniRule"/>
</dbReference>
<dbReference type="FunFam" id="3.90.1030.10:FF:000001">
    <property type="entry name" value="50S ribosomal protein L17"/>
    <property type="match status" value="1"/>
</dbReference>
<dbReference type="Gene3D" id="3.90.1030.10">
    <property type="entry name" value="Ribosomal protein L17"/>
    <property type="match status" value="1"/>
</dbReference>
<dbReference type="HAMAP" id="MF_01368">
    <property type="entry name" value="Ribosomal_bL17"/>
    <property type="match status" value="1"/>
</dbReference>
<dbReference type="InterPro" id="IPR000456">
    <property type="entry name" value="Ribosomal_bL17"/>
</dbReference>
<dbReference type="InterPro" id="IPR047859">
    <property type="entry name" value="Ribosomal_bL17_CS"/>
</dbReference>
<dbReference type="InterPro" id="IPR036373">
    <property type="entry name" value="Ribosomal_bL17_sf"/>
</dbReference>
<dbReference type="NCBIfam" id="TIGR00059">
    <property type="entry name" value="L17"/>
    <property type="match status" value="1"/>
</dbReference>
<dbReference type="PANTHER" id="PTHR14413:SF16">
    <property type="entry name" value="LARGE RIBOSOMAL SUBUNIT PROTEIN BL17M"/>
    <property type="match status" value="1"/>
</dbReference>
<dbReference type="PANTHER" id="PTHR14413">
    <property type="entry name" value="RIBOSOMAL PROTEIN L17"/>
    <property type="match status" value="1"/>
</dbReference>
<dbReference type="Pfam" id="PF01196">
    <property type="entry name" value="Ribosomal_L17"/>
    <property type="match status" value="1"/>
</dbReference>
<dbReference type="SUPFAM" id="SSF64263">
    <property type="entry name" value="Prokaryotic ribosomal protein L17"/>
    <property type="match status" value="1"/>
</dbReference>
<dbReference type="PROSITE" id="PS01167">
    <property type="entry name" value="RIBOSOMAL_L17"/>
    <property type="match status" value="1"/>
</dbReference>
<name>RL17_STRCO</name>